<keyword id="KW-0175">Coiled coil</keyword>
<keyword id="KW-1185">Reference proteome</keyword>
<dbReference type="EMBL" id="BC079426">
    <property type="protein sequence ID" value="AAH79426.3"/>
    <property type="status" value="ALT_INIT"/>
    <property type="molecule type" value="mRNA"/>
</dbReference>
<dbReference type="EMBL" id="BC089861">
    <property type="protein sequence ID" value="AAH89861.1"/>
    <property type="status" value="ALT_FRAME"/>
    <property type="molecule type" value="mRNA"/>
</dbReference>
<dbReference type="RefSeq" id="NP_001013942.2">
    <property type="nucleotide sequence ID" value="NM_001013920.2"/>
</dbReference>
<dbReference type="SMR" id="Q6AXP3"/>
<dbReference type="FunCoup" id="Q6AXP3">
    <property type="interactions" value="50"/>
</dbReference>
<dbReference type="STRING" id="10116.ENSRNOP00000052849"/>
<dbReference type="PhosphoSitePlus" id="Q6AXP3"/>
<dbReference type="PaxDb" id="10116-ENSRNOP00000052849"/>
<dbReference type="Ensembl" id="ENSRNOT00000055995.3">
    <property type="protein sequence ID" value="ENSRNOP00000052849.4"/>
    <property type="gene ID" value="ENSRNOG00000037124.3"/>
</dbReference>
<dbReference type="GeneID" id="296118"/>
<dbReference type="KEGG" id="rno:296118"/>
<dbReference type="UCSC" id="RGD:1359452">
    <property type="organism name" value="rat"/>
</dbReference>
<dbReference type="AGR" id="RGD:1359452"/>
<dbReference type="CTD" id="196951"/>
<dbReference type="RGD" id="1359452">
    <property type="gene designation" value="Fam227b"/>
</dbReference>
<dbReference type="eggNOG" id="ENOG502RXR1">
    <property type="taxonomic scope" value="Eukaryota"/>
</dbReference>
<dbReference type="GeneTree" id="ENSGT00940000162699"/>
<dbReference type="HOGENOM" id="CLU_028274_0_0_1"/>
<dbReference type="InParanoid" id="Q6AXP3"/>
<dbReference type="OrthoDB" id="73353at2759"/>
<dbReference type="PhylomeDB" id="Q6AXP3"/>
<dbReference type="TreeFam" id="TF328873"/>
<dbReference type="PRO" id="PR:Q6AXP3"/>
<dbReference type="Proteomes" id="UP000002494">
    <property type="component" value="Chromosome 3"/>
</dbReference>
<dbReference type="Bgee" id="ENSRNOG00000037124">
    <property type="expression patterns" value="Expressed in testis and 19 other cell types or tissues"/>
</dbReference>
<dbReference type="InterPro" id="IPR029417">
    <property type="entry name" value="FAM227"/>
</dbReference>
<dbReference type="PANTHER" id="PTHR33560">
    <property type="entry name" value="PROTEIN FAM227B"/>
    <property type="match status" value="1"/>
</dbReference>
<dbReference type="PANTHER" id="PTHR33560:SF2">
    <property type="entry name" value="PROTEIN FAM227B"/>
    <property type="match status" value="1"/>
</dbReference>
<dbReference type="Pfam" id="PF14922">
    <property type="entry name" value="FWWh"/>
    <property type="match status" value="1"/>
</dbReference>
<accession>Q6AXP3</accession>
<accession>Q5FVN5</accession>
<organism>
    <name type="scientific">Rattus norvegicus</name>
    <name type="common">Rat</name>
    <dbReference type="NCBI Taxonomy" id="10116"/>
    <lineage>
        <taxon>Eukaryota</taxon>
        <taxon>Metazoa</taxon>
        <taxon>Chordata</taxon>
        <taxon>Craniata</taxon>
        <taxon>Vertebrata</taxon>
        <taxon>Euteleostomi</taxon>
        <taxon>Mammalia</taxon>
        <taxon>Eutheria</taxon>
        <taxon>Euarchontoglires</taxon>
        <taxon>Glires</taxon>
        <taxon>Rodentia</taxon>
        <taxon>Myomorpha</taxon>
        <taxon>Muroidea</taxon>
        <taxon>Muridae</taxon>
        <taxon>Murinae</taxon>
        <taxon>Rattus</taxon>
    </lineage>
</organism>
<gene>
    <name type="primary">Fam227b</name>
</gene>
<feature type="chain" id="PRO_0000244101" description="Protein FAM227B">
    <location>
        <begin position="1"/>
        <end position="573"/>
    </location>
</feature>
<feature type="region of interest" description="Disordered" evidence="2">
    <location>
        <begin position="497"/>
        <end position="528"/>
    </location>
</feature>
<feature type="coiled-coil region" evidence="1">
    <location>
        <begin position="429"/>
        <end position="485"/>
    </location>
</feature>
<feature type="compositionally biased region" description="Low complexity" evidence="2">
    <location>
        <begin position="497"/>
        <end position="521"/>
    </location>
</feature>
<name>F227B_RAT</name>
<comment type="similarity">
    <text evidence="3">Belongs to the FAM227 family.</text>
</comment>
<comment type="sequence caution" evidence="3">
    <conflict type="erroneous initiation">
        <sequence resource="EMBL-CDS" id="AAH79426"/>
    </conflict>
    <text>Extended N-terminus.</text>
</comment>
<comment type="sequence caution" evidence="3">
    <conflict type="frameshift">
        <sequence resource="EMBL-CDS" id="AAH89861"/>
    </conflict>
</comment>
<protein>
    <recommendedName>
        <fullName>Protein FAM227B</fullName>
    </recommendedName>
</protein>
<reference key="1">
    <citation type="journal article" date="2004" name="Genome Res.">
        <title>The status, quality, and expansion of the NIH full-length cDNA project: the Mammalian Gene Collection (MGC).</title>
        <authorList>
            <consortium name="The MGC Project Team"/>
        </authorList>
    </citation>
    <scope>NUCLEOTIDE SEQUENCE [LARGE SCALE MRNA]</scope>
    <source>
        <tissue>Testis</tissue>
    </source>
</reference>
<proteinExistence type="evidence at transcript level"/>
<evidence type="ECO:0000255" key="1"/>
<evidence type="ECO:0000256" key="2">
    <source>
        <dbReference type="SAM" id="MobiDB-lite"/>
    </source>
</evidence>
<evidence type="ECO:0000305" key="3"/>
<sequence>MELPTPQKVQEPPKSFEEFLKSQNWDYWPRDVHIRDGDIWENTLRKLEEAVSYNSVYSYLWTNVPRLYEIVDSMESKLKECSHLLQQHASRLFESDRLISKKRTYTNLDRYKAFLKEHYRRKKIVLSDQMETEKNIEGCTFLLKQNELTQLPRHLDAKQIYLYVLRTHNLEEKVFKVWKTHILSDCSIALLHDCFWWWFLHKFKPDKRDQDWLFDRIAESYVTLFMRIPLRRKDIFFQMYPDWLAQAVYTTFQESFPESCSLFNDNFKEDLGNTIFLWLSGLKPAPGFWTHWKLQDLCTTTIHGCRRVPVKLRRGIMSSQEHTSATVGLKIEDILKNPRALPVLKEESAASKVTTKSHYRSLGPEFYKVLFDFGGQSPLILYYLKMHELGGISVTYNPKGSKFTKILREPPPAPTYCEIIKDAKRKFADNKKDFKRVKQRIKDDIKFLKEQQEQIDKELDRLQAKASKNLQEVKNDFENFLHKLRVEAKLKEEYRGSASPSESLQSLQSPNSSLSSPAMSEDFNSVEEGGLKEARSDHYLRTTHSSFSSINLIGGECTTKSTFCCSSLKSSHQ</sequence>